<proteinExistence type="evidence at transcript level"/>
<name>S20A2_XENLA</name>
<reference key="1">
    <citation type="submission" date="2004-10" db="EMBL/GenBank/DDBJ databases">
        <authorList>
            <consortium name="NIH - Xenopus Gene Collection (XGC) project"/>
        </authorList>
    </citation>
    <scope>NUCLEOTIDE SEQUENCE [LARGE SCALE MRNA]</scope>
    <source>
        <tissue>Egg</tissue>
    </source>
</reference>
<dbReference type="EMBL" id="BC084098">
    <property type="protein sequence ID" value="AAH84098.1"/>
    <property type="molecule type" value="mRNA"/>
</dbReference>
<dbReference type="RefSeq" id="NP_001088186.1">
    <property type="nucleotide sequence ID" value="NM_001094717.1"/>
</dbReference>
<dbReference type="SMR" id="Q5XHF9"/>
<dbReference type="GlyCosmos" id="Q5XHF9">
    <property type="glycosylation" value="1 site, No reported glycans"/>
</dbReference>
<dbReference type="DNASU" id="495011"/>
<dbReference type="GeneID" id="495011"/>
<dbReference type="KEGG" id="xla:495011"/>
<dbReference type="AGR" id="Xenbase:XB-GENE-1015062"/>
<dbReference type="CTD" id="495011"/>
<dbReference type="Xenbase" id="XB-GENE-1015062">
    <property type="gene designation" value="slc20a2.L"/>
</dbReference>
<dbReference type="OrthoDB" id="260807at2759"/>
<dbReference type="Proteomes" id="UP000186698">
    <property type="component" value="Chromosome 1L"/>
</dbReference>
<dbReference type="Bgee" id="495011">
    <property type="expression patterns" value="Expressed in heart and 19 other cell types or tissues"/>
</dbReference>
<dbReference type="GO" id="GO:0016324">
    <property type="term" value="C:apical plasma membrane"/>
    <property type="evidence" value="ECO:0000250"/>
    <property type="project" value="UniProtKB"/>
</dbReference>
<dbReference type="GO" id="GO:0031526">
    <property type="term" value="C:brush border membrane"/>
    <property type="evidence" value="ECO:0000250"/>
    <property type="project" value="UniProtKB"/>
</dbReference>
<dbReference type="GO" id="GO:0005886">
    <property type="term" value="C:plasma membrane"/>
    <property type="evidence" value="ECO:0000250"/>
    <property type="project" value="UniProtKB"/>
</dbReference>
<dbReference type="GO" id="GO:0005315">
    <property type="term" value="F:phosphate transmembrane transporter activity"/>
    <property type="evidence" value="ECO:0000318"/>
    <property type="project" value="GO_Central"/>
</dbReference>
<dbReference type="GO" id="GO:0005436">
    <property type="term" value="F:sodium:phosphate symporter activity"/>
    <property type="evidence" value="ECO:0000250"/>
    <property type="project" value="UniProtKB"/>
</dbReference>
<dbReference type="GO" id="GO:0035435">
    <property type="term" value="P:phosphate ion transmembrane transport"/>
    <property type="evidence" value="ECO:0000318"/>
    <property type="project" value="GO_Central"/>
</dbReference>
<dbReference type="InterPro" id="IPR001204">
    <property type="entry name" value="Phos_transporter"/>
</dbReference>
<dbReference type="PANTHER" id="PTHR11101">
    <property type="entry name" value="PHOSPHATE TRANSPORTER"/>
    <property type="match status" value="1"/>
</dbReference>
<dbReference type="PANTHER" id="PTHR11101:SF83">
    <property type="entry name" value="SODIUM-DEPENDENT PHOSPHATE TRANSPORTER 2"/>
    <property type="match status" value="1"/>
</dbReference>
<dbReference type="Pfam" id="PF01384">
    <property type="entry name" value="PHO4"/>
    <property type="match status" value="1"/>
</dbReference>
<feature type="chain" id="PRO_0000341271" description="Sodium-dependent phosphate transporter 2">
    <location>
        <begin position="1"/>
        <end position="653"/>
    </location>
</feature>
<feature type="topological domain" description="Extracellular" evidence="3">
    <location>
        <begin position="1"/>
        <end position="5"/>
    </location>
</feature>
<feature type="transmembrane region" description="Helical" evidence="3">
    <location>
        <begin position="6"/>
        <end position="26"/>
    </location>
</feature>
<feature type="topological domain" description="Cytoplasmic" evidence="3">
    <location>
        <begin position="27"/>
        <end position="46"/>
    </location>
</feature>
<feature type="transmembrane region" description="Helical" evidence="3">
    <location>
        <begin position="47"/>
        <end position="67"/>
    </location>
</feature>
<feature type="topological domain" description="Extracellular" evidence="3">
    <location>
        <begin position="68"/>
        <end position="86"/>
    </location>
</feature>
<feature type="transmembrane region" description="Helical" evidence="3">
    <location>
        <begin position="87"/>
        <end position="107"/>
    </location>
</feature>
<feature type="topological domain" description="Cytoplasmic" evidence="3">
    <location>
        <begin position="108"/>
        <end position="109"/>
    </location>
</feature>
<feature type="transmembrane region" description="Helical" evidence="3">
    <location>
        <begin position="110"/>
        <end position="130"/>
    </location>
</feature>
<feature type="topological domain" description="Extracellular" evidence="3">
    <location>
        <begin position="131"/>
        <end position="142"/>
    </location>
</feature>
<feature type="transmembrane region" description="Helical" evidence="3">
    <location>
        <begin position="143"/>
        <end position="163"/>
    </location>
</feature>
<feature type="topological domain" description="Cytoplasmic" evidence="3">
    <location>
        <begin position="164"/>
        <end position="187"/>
    </location>
</feature>
<feature type="transmembrane region" description="Helical" evidence="3">
    <location>
        <begin position="188"/>
        <end position="208"/>
    </location>
</feature>
<feature type="topological domain" description="Extracellular" evidence="3">
    <location>
        <begin position="209"/>
        <end position="217"/>
    </location>
</feature>
<feature type="transmembrane region" description="Helical" evidence="3">
    <location>
        <begin position="218"/>
        <end position="238"/>
    </location>
</feature>
<feature type="topological domain" description="Cytoplasmic" evidence="3">
    <location>
        <begin position="239"/>
        <end position="483"/>
    </location>
</feature>
<feature type="transmembrane region" description="Helical" evidence="3">
    <location>
        <begin position="484"/>
        <end position="504"/>
    </location>
</feature>
<feature type="topological domain" description="Extracellular" evidence="3">
    <location>
        <begin position="505"/>
        <end position="532"/>
    </location>
</feature>
<feature type="transmembrane region" description="Helical" evidence="3">
    <location>
        <begin position="533"/>
        <end position="553"/>
    </location>
</feature>
<feature type="topological domain" description="Cytoplasmic" evidence="3">
    <location>
        <begin position="554"/>
        <end position="572"/>
    </location>
</feature>
<feature type="transmembrane region" description="Helical" evidence="3">
    <location>
        <begin position="573"/>
        <end position="587"/>
    </location>
</feature>
<feature type="topological domain" description="Extracellular" evidence="3">
    <location>
        <begin position="588"/>
        <end position="594"/>
    </location>
</feature>
<feature type="transmembrane region" description="Helical" evidence="3">
    <location>
        <begin position="595"/>
        <end position="610"/>
    </location>
</feature>
<feature type="topological domain" description="Cytoplasmic" evidence="3">
    <location>
        <begin position="611"/>
        <end position="622"/>
    </location>
</feature>
<feature type="transmembrane region" description="Helical" evidence="3">
    <location>
        <begin position="623"/>
        <end position="643"/>
    </location>
</feature>
<feature type="topological domain" description="Extracellular" evidence="3">
    <location>
        <begin position="644"/>
        <end position="653"/>
    </location>
</feature>
<feature type="region of interest" description="Disordered" evidence="4">
    <location>
        <begin position="275"/>
        <end position="310"/>
    </location>
</feature>
<feature type="compositionally biased region" description="Low complexity" evidence="4">
    <location>
        <begin position="290"/>
        <end position="303"/>
    </location>
</feature>
<feature type="glycosylation site" description="N-linked (GlcNAc...) asparagine" evidence="3">
    <location>
        <position position="81"/>
    </location>
</feature>
<gene>
    <name type="primary">slc20a2</name>
</gene>
<protein>
    <recommendedName>
        <fullName>Sodium-dependent phosphate transporter 2</fullName>
    </recommendedName>
    <alternativeName>
        <fullName>Solute carrier family 20 member 2</fullName>
    </alternativeName>
</protein>
<comment type="function">
    <text evidence="1">Sodium-phosphate symporter which preferentially transports the monovalent form of phosphate with a stoichiometry of two sodium ions per phosphate ion.</text>
</comment>
<comment type="catalytic activity">
    <reaction evidence="1">
        <text>2 Na(+)(out) + phosphate(out) = 2 Na(+)(in) + phosphate(in)</text>
        <dbReference type="Rhea" id="RHEA:71259"/>
        <dbReference type="ChEBI" id="CHEBI:29101"/>
        <dbReference type="ChEBI" id="CHEBI:43474"/>
    </reaction>
</comment>
<comment type="subunit">
    <text evidence="1">Homodimer.</text>
</comment>
<comment type="subcellular location">
    <subcellularLocation>
        <location evidence="2">Cell membrane</location>
        <topology evidence="3">Multi-pass membrane protein</topology>
    </subcellularLocation>
    <subcellularLocation>
        <location evidence="2">Apical cell membrane</location>
        <topology evidence="3">Multi-pass membrane protein</topology>
    </subcellularLocation>
</comment>
<comment type="similarity">
    <text evidence="5">Belongs to the inorganic phosphate transporter (PiT) (TC 2.A.20) family.</text>
</comment>
<evidence type="ECO:0000250" key="1">
    <source>
        <dbReference type="UniProtKB" id="Q08357"/>
    </source>
</evidence>
<evidence type="ECO:0000250" key="2">
    <source>
        <dbReference type="UniProtKB" id="Q63488"/>
    </source>
</evidence>
<evidence type="ECO:0000255" key="3"/>
<evidence type="ECO:0000256" key="4">
    <source>
        <dbReference type="SAM" id="MobiDB-lite"/>
    </source>
</evidence>
<evidence type="ECO:0000305" key="5"/>
<accession>Q5XHF9</accession>
<keyword id="KW-1003">Cell membrane</keyword>
<keyword id="KW-0325">Glycoprotein</keyword>
<keyword id="KW-0406">Ion transport</keyword>
<keyword id="KW-0472">Membrane</keyword>
<keyword id="KW-0592">Phosphate transport</keyword>
<keyword id="KW-0675">Receptor</keyword>
<keyword id="KW-1185">Reference proteome</keyword>
<keyword id="KW-0915">Sodium</keyword>
<keyword id="KW-0739">Sodium transport</keyword>
<keyword id="KW-0769">Symport</keyword>
<keyword id="KW-0812">Transmembrane</keyword>
<keyword id="KW-1133">Transmembrane helix</keyword>
<keyword id="KW-0813">Transport</keyword>
<sequence>MVLDEYMWMVIVGFIIAFVLAFSVGANDVANSFGTAVGSGVVTLRQACILASIFETIGSVLLGAKVGETIRKGIIDVNLYNNTVDLLMAGEVSAMVGSAVWQLIASFLKLPVSGTHCIVGATIGFSLVAVGAHSVQWMQLVKIVASWFISPLLSGLMSGALFLMIKFFILNKEDPVPNGLKALPVFYAATIGINVFSILFTGAPLLGLQTFPVWATALLSVGIAIVFALVVWFFVCPWMKKKIASRLKKEGALSRISEESLDKIQDEDTSVFKELPGAKGNDESVLPLTSSSPDAAVSSESVSNGNTRVPYGRAASMTNGSIRSPFSNGTFNFDGHTVKSDAHVYHTVHKDSGLYKDLLHNIHLDRVKIDRSAPENNYRILRRNNSYTCYTAAICGVPVHSTFKSSDIAMPEDSEKLVGDTVSFSKKRLRYDSYSSYCNAVAEAEIEAEEGGVEMKLAAELADPNPPQDDSLEEDKEEKDKSQVHLLFHFLQILTACFGSFAHGGNDVSNAIGPLVALWLIYQQGGVMQEASTPVWLLLYGGVGICAGLWVWGRRVIQTMGKDLTPITPSSGFTIELASAFTVVVASNIGLPISTTHCKVGSVVAVGWIRSRKAVDWRLFRNIFLAWFVTVPVAGLFSAGVMAILQYGILPYV</sequence>
<organism>
    <name type="scientific">Xenopus laevis</name>
    <name type="common">African clawed frog</name>
    <dbReference type="NCBI Taxonomy" id="8355"/>
    <lineage>
        <taxon>Eukaryota</taxon>
        <taxon>Metazoa</taxon>
        <taxon>Chordata</taxon>
        <taxon>Craniata</taxon>
        <taxon>Vertebrata</taxon>
        <taxon>Euteleostomi</taxon>
        <taxon>Amphibia</taxon>
        <taxon>Batrachia</taxon>
        <taxon>Anura</taxon>
        <taxon>Pipoidea</taxon>
        <taxon>Pipidae</taxon>
        <taxon>Xenopodinae</taxon>
        <taxon>Xenopus</taxon>
        <taxon>Xenopus</taxon>
    </lineage>
</organism>